<name>RPOA_AUSVE</name>
<protein>
    <recommendedName>
        <fullName evidence="1">DNA-directed RNA polymerase subunit alpha</fullName>
        <shortName evidence="1">PEP</shortName>
        <ecNumber evidence="1">2.7.7.6</ecNumber>
    </recommendedName>
    <alternativeName>
        <fullName evidence="1">Plastid-encoded RNA polymerase subunit alpha</fullName>
        <shortName evidence="1">RNA polymerase subunit alpha</shortName>
    </alternativeName>
</protein>
<evidence type="ECO:0000255" key="1">
    <source>
        <dbReference type="HAMAP-Rule" id="MF_00059"/>
    </source>
</evidence>
<reference key="1">
    <citation type="journal article" date="1997" name="Mol. Phylogenet. Evol.">
        <title>Phylogenetic analysis of the Triticeae (Poaceae) based on rpoA sequence data.</title>
        <authorList>
            <person name="Petersen G."/>
            <person name="Seberg O."/>
        </authorList>
    </citation>
    <scope>NUCLEOTIDE SEQUENCE [GENOMIC DNA]</scope>
    <source>
        <strain>H6724</strain>
        <tissue>Leaf</tissue>
    </source>
</reference>
<accession>P93993</accession>
<organism>
    <name type="scientific">Australopyrum velutinum</name>
    <name type="common">Mountain wheat-grass</name>
    <name type="synonym">Agropyron velutinum</name>
    <dbReference type="NCBI Taxonomy" id="58935"/>
    <lineage>
        <taxon>Eukaryota</taxon>
        <taxon>Viridiplantae</taxon>
        <taxon>Streptophyta</taxon>
        <taxon>Embryophyta</taxon>
        <taxon>Tracheophyta</taxon>
        <taxon>Spermatophyta</taxon>
        <taxon>Magnoliopsida</taxon>
        <taxon>Liliopsida</taxon>
        <taxon>Poales</taxon>
        <taxon>Poaceae</taxon>
        <taxon>BOP clade</taxon>
        <taxon>Pooideae</taxon>
        <taxon>Triticodae</taxon>
        <taxon>Triticeae</taxon>
        <taxon>Hordeinae</taxon>
        <taxon>Australopyrum</taxon>
    </lineage>
</organism>
<sequence>MVREEVAGSTQTLQWKCVESRVDSKRLYYGRFILSPLRKGQADTVGIALRRALLGEIEGTCITRAKFGSVPHEYSTIAGIEESVQEILLNLKEIVLRSNLYGVRDASICVKGPRYITAQDIILPPSVEIVDTAQPIANLTEPIDFCIDLQIKRDRGYQTELRKNYQDGSYPIDAVXMPVRNVNYSIFSCGNGNEKHEILFLEIWTNGSLTPKEALYEASRNLIDLFLPFLHAEEEGTSFEENKNRFTPPLFTFQKRLTNLKKNKKGIPLNCIFIDQLELTSRTYNCLKRANIHTLLDLLSKTEEDLLRIDSFRMEDRKHIWDTLEKHLPIDLLKNKLSF</sequence>
<proteinExistence type="inferred from homology"/>
<geneLocation type="chloroplast"/>
<keyword id="KW-0150">Chloroplast</keyword>
<keyword id="KW-0240">DNA-directed RNA polymerase</keyword>
<keyword id="KW-0548">Nucleotidyltransferase</keyword>
<keyword id="KW-0934">Plastid</keyword>
<keyword id="KW-0804">Transcription</keyword>
<keyword id="KW-0808">Transferase</keyword>
<comment type="function">
    <text evidence="1">DNA-dependent RNA polymerase catalyzes the transcription of DNA into RNA using the four ribonucleoside triphosphates as substrates.</text>
</comment>
<comment type="catalytic activity">
    <reaction evidence="1">
        <text>RNA(n) + a ribonucleoside 5'-triphosphate = RNA(n+1) + diphosphate</text>
        <dbReference type="Rhea" id="RHEA:21248"/>
        <dbReference type="Rhea" id="RHEA-COMP:14527"/>
        <dbReference type="Rhea" id="RHEA-COMP:17342"/>
        <dbReference type="ChEBI" id="CHEBI:33019"/>
        <dbReference type="ChEBI" id="CHEBI:61557"/>
        <dbReference type="ChEBI" id="CHEBI:140395"/>
        <dbReference type="EC" id="2.7.7.6"/>
    </reaction>
</comment>
<comment type="subunit">
    <text evidence="1">In plastids the minimal PEP RNA polymerase catalytic core is composed of four subunits: alpha, beta, beta', and beta''. When a (nuclear-encoded) sigma factor is associated with the core the holoenzyme is formed, which can initiate transcription.</text>
</comment>
<comment type="subcellular location">
    <subcellularLocation>
        <location>Plastid</location>
        <location>Chloroplast</location>
    </subcellularLocation>
</comment>
<comment type="domain">
    <text evidence="1">The N-terminal domain is essential for RNAP assembly and basal transcription, whereas the C-terminal domain is involved in interaction with transcriptional regulators and with upstream promoter elements.</text>
</comment>
<comment type="similarity">
    <text evidence="1">Belongs to the RNA polymerase alpha chain family.</text>
</comment>
<feature type="chain" id="PRO_0000175442" description="DNA-directed RNA polymerase subunit alpha">
    <location>
        <begin position="1"/>
        <end position="339"/>
    </location>
</feature>
<feature type="region of interest" description="Alpha N-terminal domain (alpha-NTD)" evidence="1">
    <location>
        <begin position="1"/>
        <end position="233"/>
    </location>
</feature>
<feature type="region of interest" description="Alpha C-terminal domain (alpha-CTD)" evidence="1">
    <location>
        <begin position="264"/>
        <end position="339"/>
    </location>
</feature>
<dbReference type="EC" id="2.7.7.6" evidence="1"/>
<dbReference type="EMBL" id="Z77768">
    <property type="protein sequence ID" value="CAB01381.1"/>
    <property type="molecule type" value="Genomic_DNA"/>
</dbReference>
<dbReference type="GO" id="GO:0009507">
    <property type="term" value="C:chloroplast"/>
    <property type="evidence" value="ECO:0007669"/>
    <property type="project" value="UniProtKB-SubCell"/>
</dbReference>
<dbReference type="GO" id="GO:0000428">
    <property type="term" value="C:DNA-directed RNA polymerase complex"/>
    <property type="evidence" value="ECO:0007669"/>
    <property type="project" value="UniProtKB-KW"/>
</dbReference>
<dbReference type="GO" id="GO:0005739">
    <property type="term" value="C:mitochondrion"/>
    <property type="evidence" value="ECO:0007669"/>
    <property type="project" value="GOC"/>
</dbReference>
<dbReference type="GO" id="GO:0003677">
    <property type="term" value="F:DNA binding"/>
    <property type="evidence" value="ECO:0007669"/>
    <property type="project" value="UniProtKB-UniRule"/>
</dbReference>
<dbReference type="GO" id="GO:0003899">
    <property type="term" value="F:DNA-directed RNA polymerase activity"/>
    <property type="evidence" value="ECO:0007669"/>
    <property type="project" value="UniProtKB-UniRule"/>
</dbReference>
<dbReference type="GO" id="GO:0046983">
    <property type="term" value="F:protein dimerization activity"/>
    <property type="evidence" value="ECO:0007669"/>
    <property type="project" value="InterPro"/>
</dbReference>
<dbReference type="GO" id="GO:0006351">
    <property type="term" value="P:DNA-templated transcription"/>
    <property type="evidence" value="ECO:0007669"/>
    <property type="project" value="UniProtKB-UniRule"/>
</dbReference>
<dbReference type="CDD" id="cd06928">
    <property type="entry name" value="RNAP_alpha_NTD"/>
    <property type="match status" value="1"/>
</dbReference>
<dbReference type="FunFam" id="2.170.120.12:FF:000001">
    <property type="entry name" value="DNA-directed RNA polymerase subunit alpha"/>
    <property type="match status" value="1"/>
</dbReference>
<dbReference type="Gene3D" id="1.10.150.20">
    <property type="entry name" value="5' to 3' exonuclease, C-terminal subdomain"/>
    <property type="match status" value="1"/>
</dbReference>
<dbReference type="Gene3D" id="2.170.120.12">
    <property type="entry name" value="DNA-directed RNA polymerase, insert domain"/>
    <property type="match status" value="1"/>
</dbReference>
<dbReference type="Gene3D" id="3.30.1360.10">
    <property type="entry name" value="RNA polymerase, RBP11-like subunit"/>
    <property type="match status" value="1"/>
</dbReference>
<dbReference type="HAMAP" id="MF_00059">
    <property type="entry name" value="RNApol_bact_RpoA"/>
    <property type="match status" value="1"/>
</dbReference>
<dbReference type="InterPro" id="IPR011262">
    <property type="entry name" value="DNA-dir_RNA_pol_insert"/>
</dbReference>
<dbReference type="InterPro" id="IPR011263">
    <property type="entry name" value="DNA-dir_RNA_pol_RpoA/D/Rpb3"/>
</dbReference>
<dbReference type="InterPro" id="IPR011773">
    <property type="entry name" value="DNA-dir_RpoA"/>
</dbReference>
<dbReference type="InterPro" id="IPR036603">
    <property type="entry name" value="RBP11-like"/>
</dbReference>
<dbReference type="InterPro" id="IPR011260">
    <property type="entry name" value="RNAP_asu_C"/>
</dbReference>
<dbReference type="InterPro" id="IPR036643">
    <property type="entry name" value="RNApol_insert_sf"/>
</dbReference>
<dbReference type="NCBIfam" id="TIGR02027">
    <property type="entry name" value="rpoA"/>
    <property type="match status" value="1"/>
</dbReference>
<dbReference type="Pfam" id="PF01000">
    <property type="entry name" value="RNA_pol_A_bac"/>
    <property type="match status" value="1"/>
</dbReference>
<dbReference type="Pfam" id="PF03118">
    <property type="entry name" value="RNA_pol_A_CTD"/>
    <property type="match status" value="1"/>
</dbReference>
<dbReference type="Pfam" id="PF01193">
    <property type="entry name" value="RNA_pol_L"/>
    <property type="match status" value="1"/>
</dbReference>
<dbReference type="SMART" id="SM00662">
    <property type="entry name" value="RPOLD"/>
    <property type="match status" value="1"/>
</dbReference>
<dbReference type="SUPFAM" id="SSF47789">
    <property type="entry name" value="C-terminal domain of RNA polymerase alpha subunit"/>
    <property type="match status" value="1"/>
</dbReference>
<dbReference type="SUPFAM" id="SSF56553">
    <property type="entry name" value="Insert subdomain of RNA polymerase alpha subunit"/>
    <property type="match status" value="1"/>
</dbReference>
<dbReference type="SUPFAM" id="SSF55257">
    <property type="entry name" value="RBP11-like subunits of RNA polymerase"/>
    <property type="match status" value="1"/>
</dbReference>
<gene>
    <name evidence="1" type="primary">rpoA</name>
</gene>